<proteinExistence type="inferred from homology"/>
<dbReference type="EC" id="3.4.24.-" evidence="1"/>
<dbReference type="EMBL" id="CP001854">
    <property type="protein sequence ID" value="ADB50100.1"/>
    <property type="molecule type" value="Genomic_DNA"/>
</dbReference>
<dbReference type="RefSeq" id="WP_012933151.1">
    <property type="nucleotide sequence ID" value="NC_013739.1"/>
</dbReference>
<dbReference type="SMR" id="D3F124"/>
<dbReference type="STRING" id="469383.Cwoe_1673"/>
<dbReference type="MEROPS" id="M41.009"/>
<dbReference type="KEGG" id="cwo:Cwoe_1673"/>
<dbReference type="eggNOG" id="COG0465">
    <property type="taxonomic scope" value="Bacteria"/>
</dbReference>
<dbReference type="HOGENOM" id="CLU_000688_16_2_11"/>
<dbReference type="OrthoDB" id="9809379at2"/>
<dbReference type="Proteomes" id="UP000008229">
    <property type="component" value="Chromosome"/>
</dbReference>
<dbReference type="GO" id="GO:0005886">
    <property type="term" value="C:plasma membrane"/>
    <property type="evidence" value="ECO:0007669"/>
    <property type="project" value="UniProtKB-SubCell"/>
</dbReference>
<dbReference type="GO" id="GO:0005524">
    <property type="term" value="F:ATP binding"/>
    <property type="evidence" value="ECO:0007669"/>
    <property type="project" value="UniProtKB-UniRule"/>
</dbReference>
<dbReference type="GO" id="GO:0016887">
    <property type="term" value="F:ATP hydrolysis activity"/>
    <property type="evidence" value="ECO:0007669"/>
    <property type="project" value="UniProtKB-UniRule"/>
</dbReference>
<dbReference type="GO" id="GO:0004176">
    <property type="term" value="F:ATP-dependent peptidase activity"/>
    <property type="evidence" value="ECO:0007669"/>
    <property type="project" value="InterPro"/>
</dbReference>
<dbReference type="GO" id="GO:0004222">
    <property type="term" value="F:metalloendopeptidase activity"/>
    <property type="evidence" value="ECO:0007669"/>
    <property type="project" value="InterPro"/>
</dbReference>
<dbReference type="GO" id="GO:0008270">
    <property type="term" value="F:zinc ion binding"/>
    <property type="evidence" value="ECO:0007669"/>
    <property type="project" value="UniProtKB-UniRule"/>
</dbReference>
<dbReference type="GO" id="GO:0030163">
    <property type="term" value="P:protein catabolic process"/>
    <property type="evidence" value="ECO:0007669"/>
    <property type="project" value="UniProtKB-UniRule"/>
</dbReference>
<dbReference type="GO" id="GO:0006508">
    <property type="term" value="P:proteolysis"/>
    <property type="evidence" value="ECO:0007669"/>
    <property type="project" value="UniProtKB-KW"/>
</dbReference>
<dbReference type="CDD" id="cd19501">
    <property type="entry name" value="RecA-like_FtsH"/>
    <property type="match status" value="1"/>
</dbReference>
<dbReference type="FunFam" id="1.10.8.60:FF:000001">
    <property type="entry name" value="ATP-dependent zinc metalloprotease FtsH"/>
    <property type="match status" value="1"/>
</dbReference>
<dbReference type="FunFam" id="1.20.58.760:FF:000001">
    <property type="entry name" value="ATP-dependent zinc metalloprotease FtsH"/>
    <property type="match status" value="1"/>
</dbReference>
<dbReference type="FunFam" id="3.40.50.300:FF:000001">
    <property type="entry name" value="ATP-dependent zinc metalloprotease FtsH"/>
    <property type="match status" value="1"/>
</dbReference>
<dbReference type="Gene3D" id="1.10.8.60">
    <property type="match status" value="1"/>
</dbReference>
<dbReference type="Gene3D" id="3.40.50.300">
    <property type="entry name" value="P-loop containing nucleotide triphosphate hydrolases"/>
    <property type="match status" value="1"/>
</dbReference>
<dbReference type="Gene3D" id="1.20.58.760">
    <property type="entry name" value="Peptidase M41"/>
    <property type="match status" value="1"/>
</dbReference>
<dbReference type="HAMAP" id="MF_01458">
    <property type="entry name" value="FtsH"/>
    <property type="match status" value="1"/>
</dbReference>
<dbReference type="InterPro" id="IPR003593">
    <property type="entry name" value="AAA+_ATPase"/>
</dbReference>
<dbReference type="InterPro" id="IPR041569">
    <property type="entry name" value="AAA_lid_3"/>
</dbReference>
<dbReference type="InterPro" id="IPR003959">
    <property type="entry name" value="ATPase_AAA_core"/>
</dbReference>
<dbReference type="InterPro" id="IPR003960">
    <property type="entry name" value="ATPase_AAA_CS"/>
</dbReference>
<dbReference type="InterPro" id="IPR005936">
    <property type="entry name" value="FtsH"/>
</dbReference>
<dbReference type="InterPro" id="IPR027417">
    <property type="entry name" value="P-loop_NTPase"/>
</dbReference>
<dbReference type="InterPro" id="IPR011546">
    <property type="entry name" value="Pept_M41_FtsH_extracell"/>
</dbReference>
<dbReference type="InterPro" id="IPR000642">
    <property type="entry name" value="Peptidase_M41"/>
</dbReference>
<dbReference type="InterPro" id="IPR037219">
    <property type="entry name" value="Peptidase_M41-like"/>
</dbReference>
<dbReference type="NCBIfam" id="TIGR01241">
    <property type="entry name" value="FtsH_fam"/>
    <property type="match status" value="1"/>
</dbReference>
<dbReference type="PANTHER" id="PTHR23076:SF97">
    <property type="entry name" value="ATP-DEPENDENT ZINC METALLOPROTEASE YME1L1"/>
    <property type="match status" value="1"/>
</dbReference>
<dbReference type="PANTHER" id="PTHR23076">
    <property type="entry name" value="METALLOPROTEASE M41 FTSH"/>
    <property type="match status" value="1"/>
</dbReference>
<dbReference type="Pfam" id="PF00004">
    <property type="entry name" value="AAA"/>
    <property type="match status" value="1"/>
</dbReference>
<dbReference type="Pfam" id="PF17862">
    <property type="entry name" value="AAA_lid_3"/>
    <property type="match status" value="1"/>
</dbReference>
<dbReference type="Pfam" id="PF06480">
    <property type="entry name" value="FtsH_ext"/>
    <property type="match status" value="1"/>
</dbReference>
<dbReference type="Pfam" id="PF01434">
    <property type="entry name" value="Peptidase_M41"/>
    <property type="match status" value="1"/>
</dbReference>
<dbReference type="SMART" id="SM00382">
    <property type="entry name" value="AAA"/>
    <property type="match status" value="1"/>
</dbReference>
<dbReference type="SUPFAM" id="SSF140990">
    <property type="entry name" value="FtsH protease domain-like"/>
    <property type="match status" value="1"/>
</dbReference>
<dbReference type="SUPFAM" id="SSF52540">
    <property type="entry name" value="P-loop containing nucleoside triphosphate hydrolases"/>
    <property type="match status" value="1"/>
</dbReference>
<dbReference type="PROSITE" id="PS00674">
    <property type="entry name" value="AAA"/>
    <property type="match status" value="1"/>
</dbReference>
<evidence type="ECO:0000255" key="1">
    <source>
        <dbReference type="HAMAP-Rule" id="MF_01458"/>
    </source>
</evidence>
<evidence type="ECO:0000256" key="2">
    <source>
        <dbReference type="SAM" id="MobiDB-lite"/>
    </source>
</evidence>
<name>FTSH1_CONWI</name>
<feature type="chain" id="PRO_0000400340" description="ATP-dependent zinc metalloprotease FtsH 1">
    <location>
        <begin position="1"/>
        <end position="653"/>
    </location>
</feature>
<feature type="topological domain" description="Cytoplasmic" evidence="1">
    <location>
        <begin position="1"/>
        <end position="7"/>
    </location>
</feature>
<feature type="transmembrane region" description="Helical" evidence="1">
    <location>
        <begin position="8"/>
        <end position="28"/>
    </location>
</feature>
<feature type="topological domain" description="Extracellular" evidence="1">
    <location>
        <begin position="29"/>
        <end position="105"/>
    </location>
</feature>
<feature type="transmembrane region" description="Helical" evidence="1">
    <location>
        <begin position="106"/>
        <end position="126"/>
    </location>
</feature>
<feature type="topological domain" description="Cytoplasmic" evidence="1">
    <location>
        <begin position="127"/>
        <end position="653"/>
    </location>
</feature>
<feature type="region of interest" description="Disordered" evidence="2">
    <location>
        <begin position="603"/>
        <end position="653"/>
    </location>
</feature>
<feature type="compositionally biased region" description="Pro residues" evidence="2">
    <location>
        <begin position="611"/>
        <end position="620"/>
    </location>
</feature>
<feature type="active site" evidence="1">
    <location>
        <position position="421"/>
    </location>
</feature>
<feature type="binding site" evidence="1">
    <location>
        <begin position="198"/>
        <end position="205"/>
    </location>
    <ligand>
        <name>ATP</name>
        <dbReference type="ChEBI" id="CHEBI:30616"/>
    </ligand>
</feature>
<feature type="binding site" evidence="1">
    <location>
        <position position="420"/>
    </location>
    <ligand>
        <name>Zn(2+)</name>
        <dbReference type="ChEBI" id="CHEBI:29105"/>
        <note>catalytic</note>
    </ligand>
</feature>
<feature type="binding site" evidence="1">
    <location>
        <position position="424"/>
    </location>
    <ligand>
        <name>Zn(2+)</name>
        <dbReference type="ChEBI" id="CHEBI:29105"/>
        <note>catalytic</note>
    </ligand>
</feature>
<feature type="binding site" evidence="1">
    <location>
        <position position="496"/>
    </location>
    <ligand>
        <name>Zn(2+)</name>
        <dbReference type="ChEBI" id="CHEBI:29105"/>
        <note>catalytic</note>
    </ligand>
</feature>
<comment type="function">
    <text evidence="1">Acts as a processive, ATP-dependent zinc metallopeptidase for both cytoplasmic and membrane proteins. Plays a role in the quality control of integral membrane proteins.</text>
</comment>
<comment type="cofactor">
    <cofactor evidence="1">
        <name>Zn(2+)</name>
        <dbReference type="ChEBI" id="CHEBI:29105"/>
    </cofactor>
    <text evidence="1">Binds 1 zinc ion per subunit.</text>
</comment>
<comment type="subunit">
    <text evidence="1">Homohexamer.</text>
</comment>
<comment type="subcellular location">
    <subcellularLocation>
        <location evidence="1">Cell membrane</location>
        <topology evidence="1">Multi-pass membrane protein</topology>
        <orientation evidence="1">Cytoplasmic side</orientation>
    </subcellularLocation>
</comment>
<comment type="similarity">
    <text evidence="1">In the central section; belongs to the AAA ATPase family.</text>
</comment>
<comment type="similarity">
    <text evidence="1">In the C-terminal section; belongs to the peptidase M41 family.</text>
</comment>
<accession>D3F124</accession>
<organism>
    <name type="scientific">Conexibacter woesei (strain DSM 14684 / CCUG 47730 / CIP 108061 / JCM 11494 / NBRC 100937 / ID131577)</name>
    <dbReference type="NCBI Taxonomy" id="469383"/>
    <lineage>
        <taxon>Bacteria</taxon>
        <taxon>Bacillati</taxon>
        <taxon>Actinomycetota</taxon>
        <taxon>Thermoleophilia</taxon>
        <taxon>Solirubrobacterales</taxon>
        <taxon>Conexibacteraceae</taxon>
        <taxon>Conexibacter</taxon>
    </lineage>
</organism>
<keyword id="KW-0067">ATP-binding</keyword>
<keyword id="KW-1003">Cell membrane</keyword>
<keyword id="KW-0378">Hydrolase</keyword>
<keyword id="KW-0472">Membrane</keyword>
<keyword id="KW-0479">Metal-binding</keyword>
<keyword id="KW-0482">Metalloprotease</keyword>
<keyword id="KW-0547">Nucleotide-binding</keyword>
<keyword id="KW-0645">Protease</keyword>
<keyword id="KW-1185">Reference proteome</keyword>
<keyword id="KW-0812">Transmembrane</keyword>
<keyword id="KW-1133">Transmembrane helix</keyword>
<keyword id="KW-0862">Zinc</keyword>
<protein>
    <recommendedName>
        <fullName evidence="1">ATP-dependent zinc metalloprotease FtsH 1</fullName>
        <ecNumber evidence="1">3.4.24.-</ecNumber>
    </recommendedName>
</protein>
<reference key="1">
    <citation type="submission" date="2010-01" db="EMBL/GenBank/DDBJ databases">
        <title>The complete genome of Conexibacter woesei DSM 14684.</title>
        <authorList>
            <consortium name="US DOE Joint Genome Institute (JGI-PGF)"/>
            <person name="Lucas S."/>
            <person name="Copeland A."/>
            <person name="Lapidus A."/>
            <person name="Glavina del Rio T."/>
            <person name="Dalin E."/>
            <person name="Tice H."/>
            <person name="Bruce D."/>
            <person name="Goodwin L."/>
            <person name="Pitluck S."/>
            <person name="Kyrpides N."/>
            <person name="Mavromatis K."/>
            <person name="Ivanova N."/>
            <person name="Mikhailova N."/>
            <person name="Chertkov O."/>
            <person name="Brettin T."/>
            <person name="Detter J.C."/>
            <person name="Han C."/>
            <person name="Larimer F."/>
            <person name="Land M."/>
            <person name="Hauser L."/>
            <person name="Markowitz V."/>
            <person name="Cheng J.-F."/>
            <person name="Hugenholtz P."/>
            <person name="Woyke T."/>
            <person name="Wu D."/>
            <person name="Pukall R."/>
            <person name="Steenblock K."/>
            <person name="Schneider S."/>
            <person name="Klenk H.-P."/>
            <person name="Eisen J.A."/>
        </authorList>
    </citation>
    <scope>NUCLEOTIDE SEQUENCE [LARGE SCALE GENOMIC DNA]</scope>
    <source>
        <strain>DSM 14684 / CCUG 47730 / CIP 108061 / JCM 11494 / NBRC 100937 / ID131577</strain>
    </source>
</reference>
<gene>
    <name evidence="1" type="primary">ftsH1</name>
    <name type="ordered locus">Cwoe_1673</name>
</gene>
<sequence length="653" mass="71759">MSRFFKSAAFPILIVVVLAFFAQRLINPGDSGPRYDYSTFQQDLSEGNVKSAVVKTKGNLLEVTLKSPANQKHEVGYVPDNGNTLVGQLERERVAFDIEGTKSNGWLSLLTYVLPFLIFIGFWIFLMNQVQGGGSKVMSFGKSRARRLSVDSPKITFRDVAGADEAVEELHEIKEFLENPKKFQALGARIPKGVLLYGPPGTGKTLLARAVAGEAGVPFFSISGSDFVEMFVGVGASRVRDLFEQAKQNAPCIIFMDEIDAVGRHRGAGMGGGHDEREQTLNQLLVEMDGFEAKDNIIMIAATNRPDILDPALLRPGRFDRQVTVDRPDRKGRSKILEVHTRGKPLAREIDIDALAGQTPGFTGADLANLVNEAALLAARTGKREITQVELEEGIMRVIAGPEKKTRVMSSEERRITAYHEMGHALVGHFLEHADPVHKISVIGRGQALGYTISMPQEDKFLTTRAALGDTMAMTLGGRAAEEIIFGEITTGASNDLEKVTGTAKQMVMRFGMSEKLGPRVFGHDQSQPFLGREFSSQADYSDEIAREIDDEIRRIVETAHQSAKDILTEHRESLVYISEILIKRETIEKDQFEALVDGRTEEEVFGAEASPPPDVPLPPATERGRDTPRPLPRPGLAGGAAEMHFPERPELA</sequence>